<dbReference type="EMBL" id="AJ938182">
    <property type="protein sequence ID" value="CAI80004.1"/>
    <property type="molecule type" value="Genomic_DNA"/>
</dbReference>
<dbReference type="RefSeq" id="WP_001261460.1">
    <property type="nucleotide sequence ID" value="NC_007622.1"/>
</dbReference>
<dbReference type="PDB" id="6FXC">
    <property type="method" value="EM"/>
    <property type="resolution" value="6.76 A"/>
    <property type="chains" value="Af/Bf=1-95"/>
</dbReference>
<dbReference type="PDBsum" id="6FXC"/>
<dbReference type="EMDB" id="EMD-3637"/>
<dbReference type="SMR" id="Q2YVJ2"/>
<dbReference type="GeneID" id="98344691"/>
<dbReference type="KEGG" id="sab:SAB0316"/>
<dbReference type="HOGENOM" id="CLU_113441_5_3_9"/>
<dbReference type="GO" id="GO:0005737">
    <property type="term" value="C:cytoplasm"/>
    <property type="evidence" value="ECO:0007669"/>
    <property type="project" value="UniProtKB-ARBA"/>
</dbReference>
<dbReference type="GO" id="GO:1990904">
    <property type="term" value="C:ribonucleoprotein complex"/>
    <property type="evidence" value="ECO:0007669"/>
    <property type="project" value="UniProtKB-KW"/>
</dbReference>
<dbReference type="GO" id="GO:0005840">
    <property type="term" value="C:ribosome"/>
    <property type="evidence" value="ECO:0007669"/>
    <property type="project" value="UniProtKB-KW"/>
</dbReference>
<dbReference type="GO" id="GO:0070181">
    <property type="term" value="F:small ribosomal subunit rRNA binding"/>
    <property type="evidence" value="ECO:0007669"/>
    <property type="project" value="TreeGrafter"/>
</dbReference>
<dbReference type="GO" id="GO:0003735">
    <property type="term" value="F:structural constituent of ribosome"/>
    <property type="evidence" value="ECO:0007669"/>
    <property type="project" value="InterPro"/>
</dbReference>
<dbReference type="GO" id="GO:0006412">
    <property type="term" value="P:translation"/>
    <property type="evidence" value="ECO:0007669"/>
    <property type="project" value="UniProtKB-UniRule"/>
</dbReference>
<dbReference type="CDD" id="cd00473">
    <property type="entry name" value="bS6"/>
    <property type="match status" value="1"/>
</dbReference>
<dbReference type="FunFam" id="3.30.70.60:FF:000002">
    <property type="entry name" value="30S ribosomal protein S6"/>
    <property type="match status" value="1"/>
</dbReference>
<dbReference type="Gene3D" id="3.30.70.60">
    <property type="match status" value="1"/>
</dbReference>
<dbReference type="HAMAP" id="MF_00360">
    <property type="entry name" value="Ribosomal_bS6"/>
    <property type="match status" value="1"/>
</dbReference>
<dbReference type="InterPro" id="IPR000529">
    <property type="entry name" value="Ribosomal_bS6"/>
</dbReference>
<dbReference type="InterPro" id="IPR020815">
    <property type="entry name" value="Ribosomal_bS6_CS"/>
</dbReference>
<dbReference type="InterPro" id="IPR035980">
    <property type="entry name" value="Ribosomal_bS6_sf"/>
</dbReference>
<dbReference type="InterPro" id="IPR020814">
    <property type="entry name" value="Ribosomal_S6_plastid/chlpt"/>
</dbReference>
<dbReference type="InterPro" id="IPR014717">
    <property type="entry name" value="Transl_elong_EF1B/ribsomal_bS6"/>
</dbReference>
<dbReference type="NCBIfam" id="TIGR00166">
    <property type="entry name" value="S6"/>
    <property type="match status" value="1"/>
</dbReference>
<dbReference type="PANTHER" id="PTHR21011">
    <property type="entry name" value="MITOCHONDRIAL 28S RIBOSOMAL PROTEIN S6"/>
    <property type="match status" value="1"/>
</dbReference>
<dbReference type="PANTHER" id="PTHR21011:SF1">
    <property type="entry name" value="SMALL RIBOSOMAL SUBUNIT PROTEIN BS6M"/>
    <property type="match status" value="1"/>
</dbReference>
<dbReference type="Pfam" id="PF01250">
    <property type="entry name" value="Ribosomal_S6"/>
    <property type="match status" value="1"/>
</dbReference>
<dbReference type="SUPFAM" id="SSF54995">
    <property type="entry name" value="Ribosomal protein S6"/>
    <property type="match status" value="1"/>
</dbReference>
<dbReference type="PROSITE" id="PS01048">
    <property type="entry name" value="RIBOSOMAL_S6"/>
    <property type="match status" value="1"/>
</dbReference>
<sequence length="98" mass="11595">MRTYEVMYIVRPNIEEDAKKALVERFNGILATEGAEVLEAKDWGKRRLAYEINDFKDGFYNIVRVKSDNNKATDEFQRLAKISDDIIRYMVIREDEDK</sequence>
<protein>
    <recommendedName>
        <fullName evidence="1">Small ribosomal subunit protein bS6</fullName>
    </recommendedName>
    <alternativeName>
        <fullName evidence="2">30S ribosomal protein S6</fullName>
    </alternativeName>
</protein>
<organism>
    <name type="scientific">Staphylococcus aureus (strain bovine RF122 / ET3-1)</name>
    <dbReference type="NCBI Taxonomy" id="273036"/>
    <lineage>
        <taxon>Bacteria</taxon>
        <taxon>Bacillati</taxon>
        <taxon>Bacillota</taxon>
        <taxon>Bacilli</taxon>
        <taxon>Bacillales</taxon>
        <taxon>Staphylococcaceae</taxon>
        <taxon>Staphylococcus</taxon>
    </lineage>
</organism>
<accession>Q2YVJ2</accession>
<feature type="chain" id="PRO_0000229580" description="Small ribosomal subunit protein bS6">
    <location>
        <begin position="1"/>
        <end position="98"/>
    </location>
</feature>
<evidence type="ECO:0000255" key="1">
    <source>
        <dbReference type="HAMAP-Rule" id="MF_00360"/>
    </source>
</evidence>
<evidence type="ECO:0000305" key="2"/>
<keyword id="KW-0002">3D-structure</keyword>
<keyword id="KW-0687">Ribonucleoprotein</keyword>
<keyword id="KW-0689">Ribosomal protein</keyword>
<keyword id="KW-0694">RNA-binding</keyword>
<keyword id="KW-0699">rRNA-binding</keyword>
<proteinExistence type="evidence at protein level"/>
<reference key="1">
    <citation type="journal article" date="2007" name="PLoS ONE">
        <title>Molecular correlates of host specialization in Staphylococcus aureus.</title>
        <authorList>
            <person name="Herron-Olson L."/>
            <person name="Fitzgerald J.R."/>
            <person name="Musser J.M."/>
            <person name="Kapur V."/>
        </authorList>
    </citation>
    <scope>NUCLEOTIDE SEQUENCE [LARGE SCALE GENOMIC DNA]</scope>
    <source>
        <strain>bovine RF122 / ET3-1</strain>
    </source>
</reference>
<gene>
    <name evidence="1" type="primary">rpsF</name>
    <name type="ordered locus">SAB0316</name>
</gene>
<comment type="function">
    <text evidence="1">Binds together with bS18 to 16S ribosomal RNA.</text>
</comment>
<comment type="similarity">
    <text evidence="1">Belongs to the bacterial ribosomal protein bS6 family.</text>
</comment>
<name>RS6_STAAB</name>